<gene>
    <name evidence="2" type="primary">rpsL</name>
    <name type="ordered locus">BCc_346</name>
</gene>
<sequence>MSTINQLVRFSRVRKVTKSNVPALSKCPQKRGVCTRVYTTTPKKPNSALRKVCRVRLTNGHEVTAYIGGEGHNLQEHSVILIRGGRVKDLPGVRYHVIRGALDCSGVKDRKKGRSKYGVKKLKV</sequence>
<protein>
    <recommendedName>
        <fullName evidence="2">Small ribosomal subunit protein uS12</fullName>
    </recommendedName>
    <alternativeName>
        <fullName evidence="3">30S ribosomal protein S12</fullName>
    </alternativeName>
</protein>
<comment type="function">
    <text evidence="2">With S4 and S5 plays an important role in translational accuracy.</text>
</comment>
<comment type="function">
    <text evidence="2">Interacts with and stabilizes bases of the 16S rRNA that are involved in tRNA selection in the A site and with the mRNA backbone. Located at the interface of the 30S and 50S subunits, it traverses the body of the 30S subunit contacting proteins on the other side and probably holding the rRNA structure together. The combined cluster of proteins S8, S12 and S17 appears to hold together the shoulder and platform of the 30S subunit.</text>
</comment>
<comment type="subunit">
    <text evidence="2">Part of the 30S ribosomal subunit. Contacts proteins S8 and S17. May interact with IF1 in the 30S initiation complex.</text>
</comment>
<comment type="similarity">
    <text evidence="2">Belongs to the universal ribosomal protein uS12 family.</text>
</comment>
<keyword id="KW-0488">Methylation</keyword>
<keyword id="KW-1185">Reference proteome</keyword>
<keyword id="KW-0687">Ribonucleoprotein</keyword>
<keyword id="KW-0689">Ribosomal protein</keyword>
<keyword id="KW-0694">RNA-binding</keyword>
<keyword id="KW-0699">rRNA-binding</keyword>
<keyword id="KW-0820">tRNA-binding</keyword>
<name>RS12_BUCCC</name>
<evidence type="ECO:0000250" key="1"/>
<evidence type="ECO:0000255" key="2">
    <source>
        <dbReference type="HAMAP-Rule" id="MF_00403"/>
    </source>
</evidence>
<evidence type="ECO:0000305" key="3"/>
<accession>Q056Z9</accession>
<dbReference type="EMBL" id="CP000263">
    <property type="protein sequence ID" value="ABJ90800.1"/>
    <property type="molecule type" value="Genomic_DNA"/>
</dbReference>
<dbReference type="RefSeq" id="WP_011672719.1">
    <property type="nucleotide sequence ID" value="NC_008513.1"/>
</dbReference>
<dbReference type="SMR" id="Q056Z9"/>
<dbReference type="STRING" id="372461.BCc_346"/>
<dbReference type="KEGG" id="bcc:BCc_346"/>
<dbReference type="eggNOG" id="COG0048">
    <property type="taxonomic scope" value="Bacteria"/>
</dbReference>
<dbReference type="HOGENOM" id="CLU_104295_1_2_6"/>
<dbReference type="OrthoDB" id="9802366at2"/>
<dbReference type="Proteomes" id="UP000000669">
    <property type="component" value="Chromosome"/>
</dbReference>
<dbReference type="GO" id="GO:0015935">
    <property type="term" value="C:small ribosomal subunit"/>
    <property type="evidence" value="ECO:0007669"/>
    <property type="project" value="InterPro"/>
</dbReference>
<dbReference type="GO" id="GO:0019843">
    <property type="term" value="F:rRNA binding"/>
    <property type="evidence" value="ECO:0007669"/>
    <property type="project" value="UniProtKB-UniRule"/>
</dbReference>
<dbReference type="GO" id="GO:0003735">
    <property type="term" value="F:structural constituent of ribosome"/>
    <property type="evidence" value="ECO:0007669"/>
    <property type="project" value="InterPro"/>
</dbReference>
<dbReference type="GO" id="GO:0000049">
    <property type="term" value="F:tRNA binding"/>
    <property type="evidence" value="ECO:0007669"/>
    <property type="project" value="UniProtKB-UniRule"/>
</dbReference>
<dbReference type="GO" id="GO:0006412">
    <property type="term" value="P:translation"/>
    <property type="evidence" value="ECO:0007669"/>
    <property type="project" value="UniProtKB-UniRule"/>
</dbReference>
<dbReference type="CDD" id="cd03368">
    <property type="entry name" value="Ribosomal_S12"/>
    <property type="match status" value="1"/>
</dbReference>
<dbReference type="FunFam" id="2.40.50.140:FF:000001">
    <property type="entry name" value="30S ribosomal protein S12"/>
    <property type="match status" value="1"/>
</dbReference>
<dbReference type="Gene3D" id="2.40.50.140">
    <property type="entry name" value="Nucleic acid-binding proteins"/>
    <property type="match status" value="1"/>
</dbReference>
<dbReference type="HAMAP" id="MF_00403_B">
    <property type="entry name" value="Ribosomal_uS12_B"/>
    <property type="match status" value="1"/>
</dbReference>
<dbReference type="InterPro" id="IPR012340">
    <property type="entry name" value="NA-bd_OB-fold"/>
</dbReference>
<dbReference type="InterPro" id="IPR006032">
    <property type="entry name" value="Ribosomal_uS12"/>
</dbReference>
<dbReference type="InterPro" id="IPR005679">
    <property type="entry name" value="Ribosomal_uS12_bac"/>
</dbReference>
<dbReference type="NCBIfam" id="TIGR00981">
    <property type="entry name" value="rpsL_bact"/>
    <property type="match status" value="1"/>
</dbReference>
<dbReference type="PANTHER" id="PTHR11652">
    <property type="entry name" value="30S RIBOSOMAL PROTEIN S12 FAMILY MEMBER"/>
    <property type="match status" value="1"/>
</dbReference>
<dbReference type="Pfam" id="PF00164">
    <property type="entry name" value="Ribosom_S12_S23"/>
    <property type="match status" value="1"/>
</dbReference>
<dbReference type="PIRSF" id="PIRSF002133">
    <property type="entry name" value="Ribosomal_S12/S23"/>
    <property type="match status" value="1"/>
</dbReference>
<dbReference type="PRINTS" id="PR01034">
    <property type="entry name" value="RIBOSOMALS12"/>
</dbReference>
<dbReference type="SUPFAM" id="SSF50249">
    <property type="entry name" value="Nucleic acid-binding proteins"/>
    <property type="match status" value="1"/>
</dbReference>
<dbReference type="PROSITE" id="PS00055">
    <property type="entry name" value="RIBOSOMAL_S12"/>
    <property type="match status" value="1"/>
</dbReference>
<reference key="1">
    <citation type="journal article" date="2006" name="Science">
        <title>A small microbial genome: the end of a long symbiotic relationship?</title>
        <authorList>
            <person name="Perez-Brocal V."/>
            <person name="Gil R."/>
            <person name="Ramos S."/>
            <person name="Lamelas A."/>
            <person name="Postigo M."/>
            <person name="Michelena J.M."/>
            <person name="Silva F.J."/>
            <person name="Moya A."/>
            <person name="Latorre A."/>
        </authorList>
    </citation>
    <scope>NUCLEOTIDE SEQUENCE [LARGE SCALE GENOMIC DNA]</scope>
    <source>
        <strain>Cc</strain>
    </source>
</reference>
<proteinExistence type="inferred from homology"/>
<feature type="chain" id="PRO_0000295959" description="Small ribosomal subunit protein uS12">
    <location>
        <begin position="1"/>
        <end position="124"/>
    </location>
</feature>
<feature type="modified residue" description="3-methylthioaspartic acid" evidence="1">
    <location>
        <position position="89"/>
    </location>
</feature>
<organism>
    <name type="scientific">Buchnera aphidicola subsp. Cinara cedri (strain Cc)</name>
    <dbReference type="NCBI Taxonomy" id="372461"/>
    <lineage>
        <taxon>Bacteria</taxon>
        <taxon>Pseudomonadati</taxon>
        <taxon>Pseudomonadota</taxon>
        <taxon>Gammaproteobacteria</taxon>
        <taxon>Enterobacterales</taxon>
        <taxon>Erwiniaceae</taxon>
        <taxon>Buchnera</taxon>
    </lineage>
</organism>